<sequence>MTTSSPTTTTIAKAHGRFIRGSVSKVRRVLDQIRGRTYRDALIMLEFMPYRSTGPITKVLRSAVANAEHNLGLDPASLVIAQASADMGPSMKRYRPRAQGRAFAIKKQTCHISIAVAAQTDS</sequence>
<proteinExistence type="inferred from homology"/>
<gene>
    <name evidence="1" type="primary">rplV</name>
    <name evidence="1" type="synonym">rpl22</name>
    <name type="ordered locus">PMT_1737</name>
</gene>
<keyword id="KW-1185">Reference proteome</keyword>
<keyword id="KW-0687">Ribonucleoprotein</keyword>
<keyword id="KW-0689">Ribosomal protein</keyword>
<keyword id="KW-0694">RNA-binding</keyword>
<keyword id="KW-0699">rRNA-binding</keyword>
<feature type="chain" id="PRO_0000125202" description="Large ribosomal subunit protein uL22">
    <location>
        <begin position="1"/>
        <end position="122"/>
    </location>
</feature>
<dbReference type="EMBL" id="BX548175">
    <property type="protein sequence ID" value="CAE21912.1"/>
    <property type="molecule type" value="Genomic_DNA"/>
</dbReference>
<dbReference type="RefSeq" id="WP_011131104.1">
    <property type="nucleotide sequence ID" value="NC_005071.1"/>
</dbReference>
<dbReference type="SMR" id="Q7V538"/>
<dbReference type="KEGG" id="pmt:PMT_1737"/>
<dbReference type="eggNOG" id="COG0091">
    <property type="taxonomic scope" value="Bacteria"/>
</dbReference>
<dbReference type="HOGENOM" id="CLU_083987_3_3_3"/>
<dbReference type="OrthoDB" id="9805969at2"/>
<dbReference type="Proteomes" id="UP000001423">
    <property type="component" value="Chromosome"/>
</dbReference>
<dbReference type="GO" id="GO:0022625">
    <property type="term" value="C:cytosolic large ribosomal subunit"/>
    <property type="evidence" value="ECO:0007669"/>
    <property type="project" value="TreeGrafter"/>
</dbReference>
<dbReference type="GO" id="GO:0019843">
    <property type="term" value="F:rRNA binding"/>
    <property type="evidence" value="ECO:0007669"/>
    <property type="project" value="UniProtKB-UniRule"/>
</dbReference>
<dbReference type="GO" id="GO:0003735">
    <property type="term" value="F:structural constituent of ribosome"/>
    <property type="evidence" value="ECO:0007669"/>
    <property type="project" value="InterPro"/>
</dbReference>
<dbReference type="GO" id="GO:0006412">
    <property type="term" value="P:translation"/>
    <property type="evidence" value="ECO:0007669"/>
    <property type="project" value="UniProtKB-UniRule"/>
</dbReference>
<dbReference type="CDD" id="cd00336">
    <property type="entry name" value="Ribosomal_L22"/>
    <property type="match status" value="1"/>
</dbReference>
<dbReference type="Gene3D" id="3.90.470.10">
    <property type="entry name" value="Ribosomal protein L22/L17"/>
    <property type="match status" value="1"/>
</dbReference>
<dbReference type="HAMAP" id="MF_01331_B">
    <property type="entry name" value="Ribosomal_uL22_B"/>
    <property type="match status" value="1"/>
</dbReference>
<dbReference type="InterPro" id="IPR001063">
    <property type="entry name" value="Ribosomal_uL22"/>
</dbReference>
<dbReference type="InterPro" id="IPR005727">
    <property type="entry name" value="Ribosomal_uL22_bac/chlpt-type"/>
</dbReference>
<dbReference type="InterPro" id="IPR047867">
    <property type="entry name" value="Ribosomal_uL22_bac/org-type"/>
</dbReference>
<dbReference type="InterPro" id="IPR018260">
    <property type="entry name" value="Ribosomal_uL22_CS"/>
</dbReference>
<dbReference type="InterPro" id="IPR036394">
    <property type="entry name" value="Ribosomal_uL22_sf"/>
</dbReference>
<dbReference type="NCBIfam" id="TIGR01044">
    <property type="entry name" value="rplV_bact"/>
    <property type="match status" value="1"/>
</dbReference>
<dbReference type="PANTHER" id="PTHR13501">
    <property type="entry name" value="CHLOROPLAST 50S RIBOSOMAL PROTEIN L22-RELATED"/>
    <property type="match status" value="1"/>
</dbReference>
<dbReference type="PANTHER" id="PTHR13501:SF8">
    <property type="entry name" value="LARGE RIBOSOMAL SUBUNIT PROTEIN UL22M"/>
    <property type="match status" value="1"/>
</dbReference>
<dbReference type="Pfam" id="PF00237">
    <property type="entry name" value="Ribosomal_L22"/>
    <property type="match status" value="1"/>
</dbReference>
<dbReference type="SUPFAM" id="SSF54843">
    <property type="entry name" value="Ribosomal protein L22"/>
    <property type="match status" value="1"/>
</dbReference>
<dbReference type="PROSITE" id="PS00464">
    <property type="entry name" value="RIBOSOMAL_L22"/>
    <property type="match status" value="1"/>
</dbReference>
<comment type="function">
    <text evidence="1">This protein binds specifically to 23S rRNA; its binding is stimulated by other ribosomal proteins, e.g. L4, L17, and L20. It is important during the early stages of 50S assembly. It makes multiple contacts with different domains of the 23S rRNA in the assembled 50S subunit and ribosome (By similarity).</text>
</comment>
<comment type="function">
    <text evidence="1">The globular domain of the protein is located near the polypeptide exit tunnel on the outside of the subunit, while an extended beta-hairpin is found that lines the wall of the exit tunnel in the center of the 70S ribosome.</text>
</comment>
<comment type="subunit">
    <text evidence="1">Part of the 50S ribosomal subunit.</text>
</comment>
<comment type="similarity">
    <text evidence="1">Belongs to the universal ribosomal protein uL22 family.</text>
</comment>
<evidence type="ECO:0000255" key="1">
    <source>
        <dbReference type="HAMAP-Rule" id="MF_01331"/>
    </source>
</evidence>
<evidence type="ECO:0000305" key="2"/>
<reference key="1">
    <citation type="journal article" date="2003" name="Nature">
        <title>Genome divergence in two Prochlorococcus ecotypes reflects oceanic niche differentiation.</title>
        <authorList>
            <person name="Rocap G."/>
            <person name="Larimer F.W."/>
            <person name="Lamerdin J.E."/>
            <person name="Malfatti S."/>
            <person name="Chain P."/>
            <person name="Ahlgren N.A."/>
            <person name="Arellano A."/>
            <person name="Coleman M."/>
            <person name="Hauser L."/>
            <person name="Hess W.R."/>
            <person name="Johnson Z.I."/>
            <person name="Land M.L."/>
            <person name="Lindell D."/>
            <person name="Post A.F."/>
            <person name="Regala W."/>
            <person name="Shah M."/>
            <person name="Shaw S.L."/>
            <person name="Steglich C."/>
            <person name="Sullivan M.B."/>
            <person name="Ting C.S."/>
            <person name="Tolonen A."/>
            <person name="Webb E.A."/>
            <person name="Zinser E.R."/>
            <person name="Chisholm S.W."/>
        </authorList>
    </citation>
    <scope>NUCLEOTIDE SEQUENCE [LARGE SCALE GENOMIC DNA]</scope>
    <source>
        <strain>MIT 9313</strain>
    </source>
</reference>
<protein>
    <recommendedName>
        <fullName evidence="1">Large ribosomal subunit protein uL22</fullName>
    </recommendedName>
    <alternativeName>
        <fullName evidence="2">50S ribosomal protein L22</fullName>
    </alternativeName>
</protein>
<name>RL22_PROMM</name>
<accession>Q7V538</accession>
<organism>
    <name type="scientific">Prochlorococcus marinus (strain MIT 9313)</name>
    <dbReference type="NCBI Taxonomy" id="74547"/>
    <lineage>
        <taxon>Bacteria</taxon>
        <taxon>Bacillati</taxon>
        <taxon>Cyanobacteriota</taxon>
        <taxon>Cyanophyceae</taxon>
        <taxon>Synechococcales</taxon>
        <taxon>Prochlorococcaceae</taxon>
        <taxon>Prochlorococcus</taxon>
    </lineage>
</organism>